<reference key="1">
    <citation type="journal article" date="1994" name="Curr. Genet.">
        <title>The chloroplast gene cluster containing psbF, psbL, petG and rps3 is conserved in Chlamydomonas.</title>
        <authorList>
            <person name="Turmel M."/>
            <person name="Otis C."/>
        </authorList>
    </citation>
    <scope>NUCLEOTIDE SEQUENCE [GENOMIC DNA]</scope>
</reference>
<feature type="chain" id="PRO_0000130274" description="Small ribosomal subunit protein uS3c">
    <location>
        <begin position="1"/>
        <end position="800"/>
    </location>
</feature>
<feature type="region of interest" description="S3-like 1st part">
    <location>
        <begin position="1"/>
        <end position="118"/>
    </location>
</feature>
<feature type="region of interest" description="Intervening sequence (IVS)">
    <location>
        <begin position="119"/>
        <end position="664"/>
    </location>
</feature>
<feature type="region of interest" description="S3-like 2nd part">
    <location>
        <begin position="665"/>
        <end position="800"/>
    </location>
</feature>
<sequence length="800" mass="92603">MGQKVHPSGFRVGITKKHQSQWFARFNKNKYSQTVLEDRMIRDTLNKLFPELLNPSTKGGSAPKRHQNARIKKSRITQIKIERNIVPYQIGIQIHAENCKLLKSSIKNLQVKKDILVKLQKTRQYLTNLKIKLDKLTNAPAETQVKTNFEDSTKRSVGQLELSHEGLNTKLSKIKSLRKKLAKLKTGTSTTRANTTGTRQKKLSSKTKRSISQLLKMKLLRAKLAKLVQPKLKRKALEASTIEKTTAKTLKTKKKVSLKRKNKFETKLTKRQLKRQRVFKKRLKLRKFIRLRDRLLISKGLFLQKKGHKITKKIVLAPTPKFLKDFSLNPKVYLLPVKRIEKLLTPKKAAKGGQKSAAVKTVRTSLQTNIYNSRIQKKFVTMYVEQMKKKFLPHLNELFLEYTSKGFDSNNKAVLSLGYMKQWDFERRVDNLKVQPIEKLDRLVHNLRDKFVMKLNLLRKDFITFGSFSSNSADILGLFQLYNFLMKLKNLVNGLKLNLKHKIKTRLAISKMNGSLNTSRNEPELRSRETSQASDKLRIVDSTNSSLPQKVFRKKLENISNEYRKMKFIEYLKDVVQKHRTDNIYLYLASISESRRKLKEIKNEVKQHLDLYLPGANSIKELNQKSSEDSINLATNEVNNVLMKLAKKHPFDRTFLDCKFEELERRKTMWVQNLQLVPKISIKFFSVNQKALNLKASIVSESVVDALEKRKAFRKVIKTTKENLMRNSEIKGVKIQVAGRLNGAEIARTEWVRAGRVPLQTLRANLDYSYRTANTIYGIIGVKVWIFKGFTKLVTESTGA</sequence>
<geneLocation type="chloroplast"/>
<name>RR3_CHLMO</name>
<protein>
    <recommendedName>
        <fullName evidence="2">Small ribosomal subunit protein uS3c</fullName>
    </recommendedName>
    <alternativeName>
        <fullName>30S ribosomal protein S3, chloroplastic</fullName>
    </alternativeName>
</protein>
<evidence type="ECO:0000250" key="1"/>
<evidence type="ECO:0000305" key="2"/>
<comment type="subunit">
    <text evidence="1">Part of the 30S ribosomal subunit.</text>
</comment>
<comment type="subcellular location">
    <subcellularLocation>
        <location>Plastid</location>
        <location>Chloroplast</location>
    </subcellularLocation>
</comment>
<comment type="miscellaneous">
    <text>The large insertion sequence is present in the RNA transcript.</text>
</comment>
<comment type="similarity">
    <text evidence="2">Belongs to the universal ribosomal protein uS3 family.</text>
</comment>
<accession>P46307</accession>
<proteinExistence type="inferred from homology"/>
<organism>
    <name type="scientific">Chlamydomonas moewusii</name>
    <name type="common">Chlamydomonas eugametos</name>
    <dbReference type="NCBI Taxonomy" id="3054"/>
    <lineage>
        <taxon>Eukaryota</taxon>
        <taxon>Viridiplantae</taxon>
        <taxon>Chlorophyta</taxon>
        <taxon>core chlorophytes</taxon>
        <taxon>Chlorophyceae</taxon>
        <taxon>CS clade</taxon>
        <taxon>Chlamydomonadales</taxon>
        <taxon>Chlamydomonadaceae</taxon>
        <taxon>Chlamydomonas</taxon>
    </lineage>
</organism>
<keyword id="KW-0150">Chloroplast</keyword>
<keyword id="KW-0934">Plastid</keyword>
<keyword id="KW-0687">Ribonucleoprotein</keyword>
<keyword id="KW-0689">Ribosomal protein</keyword>
<dbReference type="EMBL" id="L29282">
    <property type="protein sequence ID" value="AAA84159.1"/>
    <property type="molecule type" value="Genomic_DNA"/>
</dbReference>
<dbReference type="PIR" id="S51368">
    <property type="entry name" value="S51368"/>
</dbReference>
<dbReference type="SMR" id="P46307"/>
<dbReference type="GO" id="GO:0009507">
    <property type="term" value="C:chloroplast"/>
    <property type="evidence" value="ECO:0007669"/>
    <property type="project" value="UniProtKB-SubCell"/>
</dbReference>
<dbReference type="GO" id="GO:0022627">
    <property type="term" value="C:cytosolic small ribosomal subunit"/>
    <property type="evidence" value="ECO:0007669"/>
    <property type="project" value="TreeGrafter"/>
</dbReference>
<dbReference type="GO" id="GO:0003723">
    <property type="term" value="F:RNA binding"/>
    <property type="evidence" value="ECO:0007669"/>
    <property type="project" value="InterPro"/>
</dbReference>
<dbReference type="GO" id="GO:0003735">
    <property type="term" value="F:structural constituent of ribosome"/>
    <property type="evidence" value="ECO:0007669"/>
    <property type="project" value="InterPro"/>
</dbReference>
<dbReference type="GO" id="GO:0006412">
    <property type="term" value="P:translation"/>
    <property type="evidence" value="ECO:0007669"/>
    <property type="project" value="UniProtKB-UniRule"/>
</dbReference>
<dbReference type="CDD" id="cd02412">
    <property type="entry name" value="KH-II_30S_S3"/>
    <property type="match status" value="1"/>
</dbReference>
<dbReference type="Gene3D" id="3.30.300.20">
    <property type="match status" value="1"/>
</dbReference>
<dbReference type="Gene3D" id="3.30.1140.32">
    <property type="entry name" value="Ribosomal protein S3, C-terminal domain"/>
    <property type="match status" value="1"/>
</dbReference>
<dbReference type="HAMAP" id="MF_01309_B">
    <property type="entry name" value="Ribosomal_uS3_B"/>
    <property type="match status" value="1"/>
</dbReference>
<dbReference type="InterPro" id="IPR015946">
    <property type="entry name" value="KH_dom-like_a/b"/>
</dbReference>
<dbReference type="InterPro" id="IPR009019">
    <property type="entry name" value="KH_sf_prok-type"/>
</dbReference>
<dbReference type="InterPro" id="IPR036419">
    <property type="entry name" value="Ribosomal_S3_C_sf"/>
</dbReference>
<dbReference type="InterPro" id="IPR005704">
    <property type="entry name" value="Ribosomal_uS3_bac-typ"/>
</dbReference>
<dbReference type="InterPro" id="IPR001351">
    <property type="entry name" value="Ribosomal_uS3_C"/>
</dbReference>
<dbReference type="InterPro" id="IPR018280">
    <property type="entry name" value="Ribosomal_uS3_CS"/>
</dbReference>
<dbReference type="NCBIfam" id="TIGR01009">
    <property type="entry name" value="rpsC_bact"/>
    <property type="match status" value="1"/>
</dbReference>
<dbReference type="PANTHER" id="PTHR11760">
    <property type="entry name" value="30S/40S RIBOSOMAL PROTEIN S3"/>
    <property type="match status" value="1"/>
</dbReference>
<dbReference type="PANTHER" id="PTHR11760:SF19">
    <property type="entry name" value="SMALL RIBOSOMAL SUBUNIT PROTEIN US3C"/>
    <property type="match status" value="1"/>
</dbReference>
<dbReference type="Pfam" id="PF00189">
    <property type="entry name" value="Ribosomal_S3_C"/>
    <property type="match status" value="1"/>
</dbReference>
<dbReference type="SUPFAM" id="SSF54814">
    <property type="entry name" value="Prokaryotic type KH domain (KH-domain type II)"/>
    <property type="match status" value="1"/>
</dbReference>
<dbReference type="SUPFAM" id="SSF54821">
    <property type="entry name" value="Ribosomal protein S3 C-terminal domain"/>
    <property type="match status" value="1"/>
</dbReference>
<dbReference type="PROSITE" id="PS00548">
    <property type="entry name" value="RIBOSOMAL_S3"/>
    <property type="match status" value="1"/>
</dbReference>
<gene>
    <name type="primary">rps3</name>
</gene>